<keyword id="KW-1017">Isopeptide bond</keyword>
<keyword id="KW-0833">Ubl conjugation pathway</keyword>
<evidence type="ECO:0000250" key="1"/>
<evidence type="ECO:0000255" key="2"/>
<evidence type="ECO:0000303" key="3">
    <source>
    </source>
</evidence>
<evidence type="ECO:0000305" key="4"/>
<evidence type="ECO:0000312" key="5">
    <source>
        <dbReference type="EMBL" id="ABI52761.1"/>
    </source>
</evidence>
<comment type="function">
    <text evidence="1">Ubiquitin-like modifier protein which binds to a number of as yet unidentified target proteins.</text>
</comment>
<comment type="similarity">
    <text evidence="4">Belongs to the UFM1 family.</text>
</comment>
<reference evidence="5" key="1">
    <citation type="journal article" date="2008" name="Insect Biochem. Mol. Biol.">
        <title>Comparative sialomics between hard and soft ticks: implications for the evolution of blood-feeding behavior.</title>
        <authorList>
            <person name="Mans B.J."/>
            <person name="Andersen J.F."/>
            <person name="Francischetti I.M."/>
            <person name="Valenzuela J.G."/>
            <person name="Schwan T.G."/>
            <person name="Pham V.M."/>
            <person name="Garfield M.K."/>
            <person name="Hammer C.H."/>
            <person name="Ribeiro J.M.C."/>
        </authorList>
    </citation>
    <scope>NUCLEOTIDE SEQUENCE [LARGE SCALE MRNA]</scope>
    <source>
        <tissue>Salivary gland</tissue>
    </source>
</reference>
<gene>
    <name evidence="3" type="ORF">AM-79</name>
</gene>
<sequence length="88" mass="9764">MSKITFKITLTSDPKLPFKVLRVPENTPFTAVLKFAAEEFKVPPATSAIITDDGIGINPSQTAGDIFLKHGSDLRLIPRDRVGLRWTR</sequence>
<proteinExistence type="inferred from homology"/>
<accession>Q09JK2</accession>
<dbReference type="EMBL" id="DQ886844">
    <property type="protein sequence ID" value="ABI52761.1"/>
    <property type="molecule type" value="mRNA"/>
</dbReference>
<dbReference type="SMR" id="Q09JK2"/>
<dbReference type="GO" id="GO:0005737">
    <property type="term" value="C:cytoplasm"/>
    <property type="evidence" value="ECO:0007669"/>
    <property type="project" value="TreeGrafter"/>
</dbReference>
<dbReference type="GO" id="GO:0005634">
    <property type="term" value="C:nucleus"/>
    <property type="evidence" value="ECO:0007669"/>
    <property type="project" value="TreeGrafter"/>
</dbReference>
<dbReference type="GO" id="GO:1990592">
    <property type="term" value="P:protein K69-linked ufmylation"/>
    <property type="evidence" value="ECO:0007669"/>
    <property type="project" value="TreeGrafter"/>
</dbReference>
<dbReference type="CDD" id="cd01766">
    <property type="entry name" value="Ubl_UFM1"/>
    <property type="match status" value="1"/>
</dbReference>
<dbReference type="FunFam" id="3.10.20.90:FF:000044">
    <property type="entry name" value="Ubiquitin-fold modifier 1"/>
    <property type="match status" value="1"/>
</dbReference>
<dbReference type="Gene3D" id="3.10.20.90">
    <property type="entry name" value="Phosphatidylinositol 3-kinase Catalytic Subunit, Chain A, domain 1"/>
    <property type="match status" value="1"/>
</dbReference>
<dbReference type="InterPro" id="IPR029071">
    <property type="entry name" value="Ubiquitin-like_domsf"/>
</dbReference>
<dbReference type="InterPro" id="IPR005375">
    <property type="entry name" value="UFM1"/>
</dbReference>
<dbReference type="PANTHER" id="PTHR15825">
    <property type="entry name" value="UBIQUITIN-FOLD MODIFIER 1"/>
    <property type="match status" value="1"/>
</dbReference>
<dbReference type="PANTHER" id="PTHR15825:SF0">
    <property type="entry name" value="UBIQUITIN-FOLD MODIFIER 1"/>
    <property type="match status" value="1"/>
</dbReference>
<dbReference type="Pfam" id="PF03671">
    <property type="entry name" value="Ufm1"/>
    <property type="match status" value="1"/>
</dbReference>
<dbReference type="PIRSF" id="PIRSF038027">
    <property type="entry name" value="Ubiquitin-like_Ufm1"/>
    <property type="match status" value="1"/>
</dbReference>
<dbReference type="SUPFAM" id="SSF54236">
    <property type="entry name" value="Ubiquitin-like"/>
    <property type="match status" value="1"/>
</dbReference>
<name>UFM1_ARGMO</name>
<feature type="chain" id="PRO_0000391995" description="Ubiquitin-fold modifier 1">
    <location>
        <begin position="1"/>
        <end position="83"/>
    </location>
</feature>
<feature type="propeptide" id="PRO_0000391996" description="Removed in mature form" evidence="1">
    <location>
        <begin position="84"/>
        <end position="88"/>
    </location>
</feature>
<feature type="cross-link" description="Glycyl lysine isopeptide (Gly-Lys) (interchain with K-? in acceptor proteins)" evidence="2">
    <location>
        <position position="83"/>
    </location>
</feature>
<protein>
    <recommendedName>
        <fullName>Ubiquitin-fold modifier 1</fullName>
    </recommendedName>
</protein>
<organism>
    <name type="scientific">Argas monolakensis</name>
    <name type="common">Mono lake bird tick</name>
    <dbReference type="NCBI Taxonomy" id="34602"/>
    <lineage>
        <taxon>Eukaryota</taxon>
        <taxon>Metazoa</taxon>
        <taxon>Ecdysozoa</taxon>
        <taxon>Arthropoda</taxon>
        <taxon>Chelicerata</taxon>
        <taxon>Arachnida</taxon>
        <taxon>Acari</taxon>
        <taxon>Parasitiformes</taxon>
        <taxon>Ixodida</taxon>
        <taxon>Ixodoidea</taxon>
        <taxon>Argasidae</taxon>
        <taxon>Argasinae</taxon>
        <taxon>Argas</taxon>
    </lineage>
</organism>